<reference key="1">
    <citation type="journal article" date="2004" name="Nat. Genet.">
        <title>Complete sequencing and characterization of 21,243 full-length human cDNAs.</title>
        <authorList>
            <person name="Ota T."/>
            <person name="Suzuki Y."/>
            <person name="Nishikawa T."/>
            <person name="Otsuki T."/>
            <person name="Sugiyama T."/>
            <person name="Irie R."/>
            <person name="Wakamatsu A."/>
            <person name="Hayashi K."/>
            <person name="Sato H."/>
            <person name="Nagai K."/>
            <person name="Kimura K."/>
            <person name="Makita H."/>
            <person name="Sekine M."/>
            <person name="Obayashi M."/>
            <person name="Nishi T."/>
            <person name="Shibahara T."/>
            <person name="Tanaka T."/>
            <person name="Ishii S."/>
            <person name="Yamamoto J."/>
            <person name="Saito K."/>
            <person name="Kawai Y."/>
            <person name="Isono Y."/>
            <person name="Nakamura Y."/>
            <person name="Nagahari K."/>
            <person name="Murakami K."/>
            <person name="Yasuda T."/>
            <person name="Iwayanagi T."/>
            <person name="Wagatsuma M."/>
            <person name="Shiratori A."/>
            <person name="Sudo H."/>
            <person name="Hosoiri T."/>
            <person name="Kaku Y."/>
            <person name="Kodaira H."/>
            <person name="Kondo H."/>
            <person name="Sugawara M."/>
            <person name="Takahashi M."/>
            <person name="Kanda K."/>
            <person name="Yokoi T."/>
            <person name="Furuya T."/>
            <person name="Kikkawa E."/>
            <person name="Omura Y."/>
            <person name="Abe K."/>
            <person name="Kamihara K."/>
            <person name="Katsuta N."/>
            <person name="Sato K."/>
            <person name="Tanikawa M."/>
            <person name="Yamazaki M."/>
            <person name="Ninomiya K."/>
            <person name="Ishibashi T."/>
            <person name="Yamashita H."/>
            <person name="Murakawa K."/>
            <person name="Fujimori K."/>
            <person name="Tanai H."/>
            <person name="Kimata M."/>
            <person name="Watanabe M."/>
            <person name="Hiraoka S."/>
            <person name="Chiba Y."/>
            <person name="Ishida S."/>
            <person name="Ono Y."/>
            <person name="Takiguchi S."/>
            <person name="Watanabe S."/>
            <person name="Yosida M."/>
            <person name="Hotuta T."/>
            <person name="Kusano J."/>
            <person name="Kanehori K."/>
            <person name="Takahashi-Fujii A."/>
            <person name="Hara H."/>
            <person name="Tanase T.-O."/>
            <person name="Nomura Y."/>
            <person name="Togiya S."/>
            <person name="Komai F."/>
            <person name="Hara R."/>
            <person name="Takeuchi K."/>
            <person name="Arita M."/>
            <person name="Imose N."/>
            <person name="Musashino K."/>
            <person name="Yuuki H."/>
            <person name="Oshima A."/>
            <person name="Sasaki N."/>
            <person name="Aotsuka S."/>
            <person name="Yoshikawa Y."/>
            <person name="Matsunawa H."/>
            <person name="Ichihara T."/>
            <person name="Shiohata N."/>
            <person name="Sano S."/>
            <person name="Moriya S."/>
            <person name="Momiyama H."/>
            <person name="Satoh N."/>
            <person name="Takami S."/>
            <person name="Terashima Y."/>
            <person name="Suzuki O."/>
            <person name="Nakagawa S."/>
            <person name="Senoh A."/>
            <person name="Mizoguchi H."/>
            <person name="Goto Y."/>
            <person name="Shimizu F."/>
            <person name="Wakebe H."/>
            <person name="Hishigaki H."/>
            <person name="Watanabe T."/>
            <person name="Sugiyama A."/>
            <person name="Takemoto M."/>
            <person name="Kawakami B."/>
            <person name="Yamazaki M."/>
            <person name="Watanabe K."/>
            <person name="Kumagai A."/>
            <person name="Itakura S."/>
            <person name="Fukuzumi Y."/>
            <person name="Fujimori Y."/>
            <person name="Komiyama M."/>
            <person name="Tashiro H."/>
            <person name="Tanigami A."/>
            <person name="Fujiwara T."/>
            <person name="Ono T."/>
            <person name="Yamada K."/>
            <person name="Fujii Y."/>
            <person name="Ozaki K."/>
            <person name="Hirao M."/>
            <person name="Ohmori Y."/>
            <person name="Kawabata A."/>
            <person name="Hikiji T."/>
            <person name="Kobatake N."/>
            <person name="Inagaki H."/>
            <person name="Ikema Y."/>
            <person name="Okamoto S."/>
            <person name="Okitani R."/>
            <person name="Kawakami T."/>
            <person name="Noguchi S."/>
            <person name="Itoh T."/>
            <person name="Shigeta K."/>
            <person name="Senba T."/>
            <person name="Matsumura K."/>
            <person name="Nakajima Y."/>
            <person name="Mizuno T."/>
            <person name="Morinaga M."/>
            <person name="Sasaki M."/>
            <person name="Togashi T."/>
            <person name="Oyama M."/>
            <person name="Hata H."/>
            <person name="Watanabe M."/>
            <person name="Komatsu T."/>
            <person name="Mizushima-Sugano J."/>
            <person name="Satoh T."/>
            <person name="Shirai Y."/>
            <person name="Takahashi Y."/>
            <person name="Nakagawa K."/>
            <person name="Okumura K."/>
            <person name="Nagase T."/>
            <person name="Nomura N."/>
            <person name="Kikuchi H."/>
            <person name="Masuho Y."/>
            <person name="Yamashita R."/>
            <person name="Nakai K."/>
            <person name="Yada T."/>
            <person name="Nakamura Y."/>
            <person name="Ohara O."/>
            <person name="Isogai T."/>
            <person name="Sugano S."/>
        </authorList>
    </citation>
    <scope>NUCLEOTIDE SEQUENCE [LARGE SCALE MRNA] (ISOFORM 2)</scope>
    <source>
        <tissue>Corpus callosum</tissue>
    </source>
</reference>
<reference key="2">
    <citation type="journal article" date="2006" name="Nature">
        <title>The finished DNA sequence of human chromosome 12.</title>
        <authorList>
            <person name="Scherer S.E."/>
            <person name="Muzny D.M."/>
            <person name="Buhay C.J."/>
            <person name="Chen R."/>
            <person name="Cree A."/>
            <person name="Ding Y."/>
            <person name="Dugan-Rocha S."/>
            <person name="Gill R."/>
            <person name="Gunaratne P."/>
            <person name="Harris R.A."/>
            <person name="Hawes A.C."/>
            <person name="Hernandez J."/>
            <person name="Hodgson A.V."/>
            <person name="Hume J."/>
            <person name="Jackson A."/>
            <person name="Khan Z.M."/>
            <person name="Kovar-Smith C."/>
            <person name="Lewis L.R."/>
            <person name="Lozado R.J."/>
            <person name="Metzker M.L."/>
            <person name="Milosavljevic A."/>
            <person name="Miner G.R."/>
            <person name="Montgomery K.T."/>
            <person name="Morgan M.B."/>
            <person name="Nazareth L.V."/>
            <person name="Scott G."/>
            <person name="Sodergren E."/>
            <person name="Song X.-Z."/>
            <person name="Steffen D."/>
            <person name="Lovering R.C."/>
            <person name="Wheeler D.A."/>
            <person name="Worley K.C."/>
            <person name="Yuan Y."/>
            <person name="Zhang Z."/>
            <person name="Adams C.Q."/>
            <person name="Ansari-Lari M.A."/>
            <person name="Ayele M."/>
            <person name="Brown M.J."/>
            <person name="Chen G."/>
            <person name="Chen Z."/>
            <person name="Clerc-Blankenburg K.P."/>
            <person name="Davis C."/>
            <person name="Delgado O."/>
            <person name="Dinh H.H."/>
            <person name="Draper H."/>
            <person name="Gonzalez-Garay M.L."/>
            <person name="Havlak P."/>
            <person name="Jackson L.R."/>
            <person name="Jacob L.S."/>
            <person name="Kelly S.H."/>
            <person name="Li L."/>
            <person name="Li Z."/>
            <person name="Liu J."/>
            <person name="Liu W."/>
            <person name="Lu J."/>
            <person name="Maheshwari M."/>
            <person name="Nguyen B.-V."/>
            <person name="Okwuonu G.O."/>
            <person name="Pasternak S."/>
            <person name="Perez L.M."/>
            <person name="Plopper F.J.H."/>
            <person name="Santibanez J."/>
            <person name="Shen H."/>
            <person name="Tabor P.E."/>
            <person name="Verduzco D."/>
            <person name="Waldron L."/>
            <person name="Wang Q."/>
            <person name="Williams G.A."/>
            <person name="Zhang J."/>
            <person name="Zhou J."/>
            <person name="Allen C.C."/>
            <person name="Amin A.G."/>
            <person name="Anyalebechi V."/>
            <person name="Bailey M."/>
            <person name="Barbaria J.A."/>
            <person name="Bimage K.E."/>
            <person name="Bryant N.P."/>
            <person name="Burch P.E."/>
            <person name="Burkett C.E."/>
            <person name="Burrell K.L."/>
            <person name="Calderon E."/>
            <person name="Cardenas V."/>
            <person name="Carter K."/>
            <person name="Casias K."/>
            <person name="Cavazos I."/>
            <person name="Cavazos S.R."/>
            <person name="Ceasar H."/>
            <person name="Chacko J."/>
            <person name="Chan S.N."/>
            <person name="Chavez D."/>
            <person name="Christopoulos C."/>
            <person name="Chu J."/>
            <person name="Cockrell R."/>
            <person name="Cox C.D."/>
            <person name="Dang M."/>
            <person name="Dathorne S.R."/>
            <person name="David R."/>
            <person name="Davis C.M."/>
            <person name="Davy-Carroll L."/>
            <person name="Deshazo D.R."/>
            <person name="Donlin J.E."/>
            <person name="D'Souza L."/>
            <person name="Eaves K.A."/>
            <person name="Egan A."/>
            <person name="Emery-Cohen A.J."/>
            <person name="Escotto M."/>
            <person name="Flagg N."/>
            <person name="Forbes L.D."/>
            <person name="Gabisi A.M."/>
            <person name="Garza M."/>
            <person name="Hamilton C."/>
            <person name="Henderson N."/>
            <person name="Hernandez O."/>
            <person name="Hines S."/>
            <person name="Hogues M.E."/>
            <person name="Huang M."/>
            <person name="Idlebird D.G."/>
            <person name="Johnson R."/>
            <person name="Jolivet A."/>
            <person name="Jones S."/>
            <person name="Kagan R."/>
            <person name="King L.M."/>
            <person name="Leal B."/>
            <person name="Lebow H."/>
            <person name="Lee S."/>
            <person name="LeVan J.M."/>
            <person name="Lewis L.C."/>
            <person name="London P."/>
            <person name="Lorensuhewa L.M."/>
            <person name="Loulseged H."/>
            <person name="Lovett D.A."/>
            <person name="Lucier A."/>
            <person name="Lucier R.L."/>
            <person name="Ma J."/>
            <person name="Madu R.C."/>
            <person name="Mapua P."/>
            <person name="Martindale A.D."/>
            <person name="Martinez E."/>
            <person name="Massey E."/>
            <person name="Mawhiney S."/>
            <person name="Meador M.G."/>
            <person name="Mendez S."/>
            <person name="Mercado C."/>
            <person name="Mercado I.C."/>
            <person name="Merritt C.E."/>
            <person name="Miner Z.L."/>
            <person name="Minja E."/>
            <person name="Mitchell T."/>
            <person name="Mohabbat F."/>
            <person name="Mohabbat K."/>
            <person name="Montgomery B."/>
            <person name="Moore N."/>
            <person name="Morris S."/>
            <person name="Munidasa M."/>
            <person name="Ngo R.N."/>
            <person name="Nguyen N.B."/>
            <person name="Nickerson E."/>
            <person name="Nwaokelemeh O.O."/>
            <person name="Nwokenkwo S."/>
            <person name="Obregon M."/>
            <person name="Oguh M."/>
            <person name="Oragunye N."/>
            <person name="Oviedo R.J."/>
            <person name="Parish B.J."/>
            <person name="Parker D.N."/>
            <person name="Parrish J."/>
            <person name="Parks K.L."/>
            <person name="Paul H.A."/>
            <person name="Payton B.A."/>
            <person name="Perez A."/>
            <person name="Perrin W."/>
            <person name="Pickens A."/>
            <person name="Primus E.L."/>
            <person name="Pu L.-L."/>
            <person name="Puazo M."/>
            <person name="Quiles M.M."/>
            <person name="Quiroz J.B."/>
            <person name="Rabata D."/>
            <person name="Reeves K."/>
            <person name="Ruiz S.J."/>
            <person name="Shao H."/>
            <person name="Sisson I."/>
            <person name="Sonaike T."/>
            <person name="Sorelle R.P."/>
            <person name="Sutton A.E."/>
            <person name="Svatek A.F."/>
            <person name="Svetz L.A."/>
            <person name="Tamerisa K.S."/>
            <person name="Taylor T.R."/>
            <person name="Teague B."/>
            <person name="Thomas N."/>
            <person name="Thorn R.D."/>
            <person name="Trejos Z.Y."/>
            <person name="Trevino B.K."/>
            <person name="Ukegbu O.N."/>
            <person name="Urban J.B."/>
            <person name="Vasquez L.I."/>
            <person name="Vera V.A."/>
            <person name="Villasana D.M."/>
            <person name="Wang L."/>
            <person name="Ward-Moore S."/>
            <person name="Warren J.T."/>
            <person name="Wei X."/>
            <person name="White F."/>
            <person name="Williamson A.L."/>
            <person name="Wleczyk R."/>
            <person name="Wooden H.S."/>
            <person name="Wooden S.H."/>
            <person name="Yen J."/>
            <person name="Yoon L."/>
            <person name="Yoon V."/>
            <person name="Zorrilla S.E."/>
            <person name="Nelson D."/>
            <person name="Kucherlapati R."/>
            <person name="Weinstock G."/>
            <person name="Gibbs R.A."/>
        </authorList>
    </citation>
    <scope>NUCLEOTIDE SEQUENCE [LARGE SCALE GENOMIC DNA]</scope>
</reference>
<reference key="3">
    <citation type="submission" date="2005-09" db="EMBL/GenBank/DDBJ databases">
        <title>Exhaustive RT-PCR and sequencing of all novel TWINSCAN predictions in human.</title>
        <authorList>
            <person name="Stevens M."/>
            <person name="Wei C."/>
            <person name="Gross S.S."/>
            <person name="McPherson J."/>
            <person name="Brent M.R."/>
        </authorList>
    </citation>
    <scope>NUCLEOTIDE SEQUENCE [LARGE SCALE MRNA] OF 344-496 (ISOFORM 3)</scope>
</reference>
<reference key="4">
    <citation type="journal article" date="2013" name="J. Proteome Res.">
        <title>Toward a comprehensive characterization of a human cancer cell phosphoproteome.</title>
        <authorList>
            <person name="Zhou H."/>
            <person name="Di Palma S."/>
            <person name="Preisinger C."/>
            <person name="Peng M."/>
            <person name="Polat A.N."/>
            <person name="Heck A.J."/>
            <person name="Mohammed S."/>
        </authorList>
    </citation>
    <scope>PHOSPHORYLATION [LARGE SCALE ANALYSIS] AT SER-365</scope>
    <scope>IDENTIFICATION BY MASS SPECTROMETRY [LARGE SCALE ANALYSIS]</scope>
    <source>
        <tissue>Cervix carcinoma</tissue>
        <tissue>Erythroleukemia</tissue>
    </source>
</reference>
<reference key="5">
    <citation type="journal article" date="2017" name="J. Med. Genet.">
        <title>Mutations in MYO1H cause a recessive form of central hypoventilation with autonomic dysfunction.</title>
        <authorList>
            <person name="Spielmann M."/>
            <person name="Hernandez-Miranda L.R."/>
            <person name="Ceccherini I."/>
            <person name="Weese-Mayer D.E."/>
            <person name="Kragesteen B.K."/>
            <person name="Harabula I."/>
            <person name="Krawitz P."/>
            <person name="Birchmeier C."/>
            <person name="Leonard N."/>
            <person name="Mundlos S."/>
        </authorList>
    </citation>
    <scope>INVOLVEMENT IN CCHS2</scope>
</reference>
<gene>
    <name type="primary">MYO1H</name>
</gene>
<organism>
    <name type="scientific">Homo sapiens</name>
    <name type="common">Human</name>
    <dbReference type="NCBI Taxonomy" id="9606"/>
    <lineage>
        <taxon>Eukaryota</taxon>
        <taxon>Metazoa</taxon>
        <taxon>Chordata</taxon>
        <taxon>Craniata</taxon>
        <taxon>Vertebrata</taxon>
        <taxon>Euteleostomi</taxon>
        <taxon>Mammalia</taxon>
        <taxon>Eutheria</taxon>
        <taxon>Euarchontoglires</taxon>
        <taxon>Primates</taxon>
        <taxon>Haplorrhini</taxon>
        <taxon>Catarrhini</taxon>
        <taxon>Hominidae</taxon>
        <taxon>Homo</taxon>
    </lineage>
</organism>
<comment type="function">
    <text evidence="1">Myosins are actin-based motor molecules with ATPase activity. Unconventional myosins serve in intracellular movements. Their highly divergent tails are presumed to bind to membranous compartments, which would be moved relative to actin filaments (By similarity).</text>
</comment>
<comment type="alternative products">
    <event type="alternative splicing"/>
    <isoform>
        <id>Q8N1T3-1</id>
        <name>1</name>
        <sequence type="displayed"/>
    </isoform>
    <isoform>
        <id>Q8N1T3-2</id>
        <name>2</name>
        <sequence type="described" ref="VSP_033497 VSP_033498 VSP_033499"/>
    </isoform>
    <isoform>
        <id>Q8N1T3-3</id>
        <name>3</name>
        <sequence type="described" ref="VSP_053792"/>
    </isoform>
</comment>
<comment type="disease" evidence="5">
    <disease id="DI-06200">
        <name>Central hypoventilation syndrome, congenital, 2, and autonomic dysfunction</name>
        <acronym>CCHS2</acronym>
        <description>An autosomal recessive form of congenital central hypoventilation syndrome, a rare disorder characterized by abnormal control of respiration in the absence of neuromuscular, lung or cardiac disease, or an identifiable brainstem lesion. CCHS2 is characterized by shallow breathing and apneic spells apparent in the neonatal period. Some patients have other features of autonomic dysfunction, including bladder dysfunction, sinus bradycardia, and temperature dysregulation.</description>
        <dbReference type="MIM" id="619482"/>
    </disease>
    <text>The disease is caused by variants affecting the gene represented in this entry.</text>
</comment>
<comment type="miscellaneous">
    <molecule>Isoform 3</molecule>
    <text evidence="8">May be due to intron retention.</text>
</comment>
<comment type="similarity">
    <text evidence="8">Belongs to the TRAFAC class myosin-kinesin ATPase superfamily. Myosin family.</text>
</comment>
<comment type="caution">
    <text evidence="8">Represents an unconventional myosin. This protein should not be confused with the conventional myosin-1 (MYH1).</text>
</comment>
<evidence type="ECO:0000250" key="1"/>
<evidence type="ECO:0000255" key="2">
    <source>
        <dbReference type="PROSITE-ProRule" id="PRU00116"/>
    </source>
</evidence>
<evidence type="ECO:0000255" key="3">
    <source>
        <dbReference type="PROSITE-ProRule" id="PRU00782"/>
    </source>
</evidence>
<evidence type="ECO:0000255" key="4">
    <source>
        <dbReference type="PROSITE-ProRule" id="PRU01093"/>
    </source>
</evidence>
<evidence type="ECO:0000269" key="5">
    <source>
    </source>
</evidence>
<evidence type="ECO:0000303" key="6">
    <source>
    </source>
</evidence>
<evidence type="ECO:0000303" key="7">
    <source ref="3"/>
</evidence>
<evidence type="ECO:0000305" key="8"/>
<evidence type="ECO:0007744" key="9">
    <source>
    </source>
</evidence>
<evidence type="ECO:0007829" key="10">
    <source>
        <dbReference type="PDB" id="6MBM"/>
    </source>
</evidence>
<accession>Q8N1T3</accession>
<accession>F5H3C6</accession>
<proteinExistence type="evidence at protein level"/>
<dbReference type="EMBL" id="AK094906">
    <property type="protein sequence ID" value="BAC04454.1"/>
    <property type="molecule type" value="mRNA"/>
</dbReference>
<dbReference type="EMBL" id="AC007570">
    <property type="status" value="NOT_ANNOTATED_CDS"/>
    <property type="molecule type" value="Genomic_DNA"/>
</dbReference>
<dbReference type="EMBL" id="AC012384">
    <property type="status" value="NOT_ANNOTATED_CDS"/>
    <property type="molecule type" value="Genomic_DNA"/>
</dbReference>
<dbReference type="EMBL" id="DV080460">
    <property type="status" value="NOT_ANNOTATED_CDS"/>
    <property type="molecule type" value="mRNA"/>
</dbReference>
<dbReference type="RefSeq" id="XP_047284694.1">
    <molecule id="Q8N1T3-3"/>
    <property type="nucleotide sequence ID" value="XM_047428738.1"/>
</dbReference>
<dbReference type="PDB" id="6MBM">
    <property type="method" value="NMR"/>
    <property type="chains" value="A=751-766"/>
</dbReference>
<dbReference type="PDB" id="8EB1">
    <property type="method" value="NMR"/>
    <property type="chains" value="A=751-766"/>
</dbReference>
<dbReference type="PDBsum" id="6MBM"/>
<dbReference type="PDBsum" id="8EB1"/>
<dbReference type="SMR" id="Q8N1T3"/>
<dbReference type="FunCoup" id="Q8N1T3">
    <property type="interactions" value="62"/>
</dbReference>
<dbReference type="STRING" id="9606.ENSP00000444076"/>
<dbReference type="GlyGen" id="Q8N1T3">
    <property type="glycosylation" value="1 site, 1 O-linked glycan (1 site)"/>
</dbReference>
<dbReference type="iPTMnet" id="Q8N1T3"/>
<dbReference type="PhosphoSitePlus" id="Q8N1T3"/>
<dbReference type="BioMuta" id="MYO1H"/>
<dbReference type="DMDM" id="189083206"/>
<dbReference type="jPOST" id="Q8N1T3"/>
<dbReference type="MassIVE" id="Q8N1T3"/>
<dbReference type="PaxDb" id="9606-ENSP00000439182"/>
<dbReference type="PeptideAtlas" id="Q8N1T3"/>
<dbReference type="ProteomicsDB" id="26232"/>
<dbReference type="ProteomicsDB" id="71631">
    <molecule id="Q8N1T3-1"/>
</dbReference>
<dbReference type="UCSC" id="uc010sxn.1">
    <molecule id="Q8N1T3-1"/>
    <property type="organism name" value="human"/>
</dbReference>
<dbReference type="AGR" id="HGNC:13879"/>
<dbReference type="GeneCards" id="MYO1H"/>
<dbReference type="HGNC" id="HGNC:13879">
    <property type="gene designation" value="MYO1H"/>
</dbReference>
<dbReference type="MalaCards" id="MYO1H"/>
<dbReference type="MIM" id="614636">
    <property type="type" value="gene"/>
</dbReference>
<dbReference type="MIM" id="619482">
    <property type="type" value="phenotype"/>
</dbReference>
<dbReference type="neXtProt" id="NX_Q8N1T3"/>
<dbReference type="Orphanet" id="661">
    <property type="disease" value="Congenital central hypoventilation syndrome"/>
</dbReference>
<dbReference type="eggNOG" id="KOG0164">
    <property type="taxonomic scope" value="Eukaryota"/>
</dbReference>
<dbReference type="HOGENOM" id="CLU_000192_7_7_1"/>
<dbReference type="InParanoid" id="Q8N1T3"/>
<dbReference type="OrthoDB" id="6108017at2759"/>
<dbReference type="PAN-GO" id="Q8N1T3">
    <property type="GO annotations" value="9 GO annotations based on evolutionary models"/>
</dbReference>
<dbReference type="PhylomeDB" id="Q8N1T3"/>
<dbReference type="TreeFam" id="TF312960"/>
<dbReference type="PathwayCommons" id="Q8N1T3"/>
<dbReference type="ChiTaRS" id="MYO1H">
    <property type="organism name" value="human"/>
</dbReference>
<dbReference type="Pharos" id="Q8N1T3">
    <property type="development level" value="Tdark"/>
</dbReference>
<dbReference type="PRO" id="PR:Q8N1T3"/>
<dbReference type="Proteomes" id="UP000005640">
    <property type="component" value="Chromosome 12"/>
</dbReference>
<dbReference type="RNAct" id="Q8N1T3">
    <property type="molecule type" value="protein"/>
</dbReference>
<dbReference type="GO" id="GO:0015629">
    <property type="term" value="C:actin cytoskeleton"/>
    <property type="evidence" value="ECO:0000318"/>
    <property type="project" value="GO_Central"/>
</dbReference>
<dbReference type="GO" id="GO:0005737">
    <property type="term" value="C:cytoplasm"/>
    <property type="evidence" value="ECO:0000318"/>
    <property type="project" value="GO_Central"/>
</dbReference>
<dbReference type="GO" id="GO:0005902">
    <property type="term" value="C:microvillus"/>
    <property type="evidence" value="ECO:0000318"/>
    <property type="project" value="GO_Central"/>
</dbReference>
<dbReference type="GO" id="GO:0016459">
    <property type="term" value="C:myosin complex"/>
    <property type="evidence" value="ECO:0007669"/>
    <property type="project" value="UniProtKB-KW"/>
</dbReference>
<dbReference type="GO" id="GO:0005886">
    <property type="term" value="C:plasma membrane"/>
    <property type="evidence" value="ECO:0000318"/>
    <property type="project" value="GO_Central"/>
</dbReference>
<dbReference type="GO" id="GO:0051015">
    <property type="term" value="F:actin filament binding"/>
    <property type="evidence" value="ECO:0000318"/>
    <property type="project" value="GO_Central"/>
</dbReference>
<dbReference type="GO" id="GO:0005524">
    <property type="term" value="F:ATP binding"/>
    <property type="evidence" value="ECO:0007669"/>
    <property type="project" value="UniProtKB-KW"/>
</dbReference>
<dbReference type="GO" id="GO:0000146">
    <property type="term" value="F:microfilament motor activity"/>
    <property type="evidence" value="ECO:0000318"/>
    <property type="project" value="GO_Central"/>
</dbReference>
<dbReference type="GO" id="GO:0007015">
    <property type="term" value="P:actin filament organization"/>
    <property type="evidence" value="ECO:0000318"/>
    <property type="project" value="GO_Central"/>
</dbReference>
<dbReference type="GO" id="GO:0030048">
    <property type="term" value="P:actin filament-based movement"/>
    <property type="evidence" value="ECO:0000318"/>
    <property type="project" value="GO_Central"/>
</dbReference>
<dbReference type="GO" id="GO:0006897">
    <property type="term" value="P:endocytosis"/>
    <property type="evidence" value="ECO:0000318"/>
    <property type="project" value="GO_Central"/>
</dbReference>
<dbReference type="CDD" id="cd01378">
    <property type="entry name" value="MYSc_Myo1"/>
    <property type="match status" value="1"/>
</dbReference>
<dbReference type="FunFam" id="1.10.10.820:FF:000001">
    <property type="entry name" value="Myosin heavy chain"/>
    <property type="match status" value="1"/>
</dbReference>
<dbReference type="FunFam" id="3.40.850.10:FF:000101">
    <property type="entry name" value="Slow myosin heavy chain 2"/>
    <property type="match status" value="1"/>
</dbReference>
<dbReference type="FunFam" id="1.20.58.530:FF:000004">
    <property type="entry name" value="Unconventional myosin ID"/>
    <property type="match status" value="1"/>
</dbReference>
<dbReference type="Gene3D" id="1.10.10.820">
    <property type="match status" value="1"/>
</dbReference>
<dbReference type="Gene3D" id="1.20.5.190">
    <property type="match status" value="1"/>
</dbReference>
<dbReference type="Gene3D" id="1.20.58.530">
    <property type="match status" value="1"/>
</dbReference>
<dbReference type="Gene3D" id="6.20.240.20">
    <property type="match status" value="1"/>
</dbReference>
<dbReference type="Gene3D" id="3.40.850.10">
    <property type="entry name" value="Kinesin motor domain"/>
    <property type="match status" value="1"/>
</dbReference>
<dbReference type="Gene3D" id="1.20.120.720">
    <property type="entry name" value="Myosin VI head, motor domain, U50 subdomain"/>
    <property type="match status" value="1"/>
</dbReference>
<dbReference type="InterPro" id="IPR036961">
    <property type="entry name" value="Kinesin_motor_dom_sf"/>
</dbReference>
<dbReference type="InterPro" id="IPR001609">
    <property type="entry name" value="Myosin_head_motor_dom-like"/>
</dbReference>
<dbReference type="InterPro" id="IPR010926">
    <property type="entry name" value="Myosin_TH1"/>
</dbReference>
<dbReference type="InterPro" id="IPR036072">
    <property type="entry name" value="MYSc_Myo1"/>
</dbReference>
<dbReference type="InterPro" id="IPR027417">
    <property type="entry name" value="P-loop_NTPase"/>
</dbReference>
<dbReference type="PANTHER" id="PTHR13140">
    <property type="entry name" value="MYOSIN"/>
    <property type="match status" value="1"/>
</dbReference>
<dbReference type="PANTHER" id="PTHR13140:SF353">
    <property type="entry name" value="UNCONVENTIONAL MYOSIN-IH"/>
    <property type="match status" value="1"/>
</dbReference>
<dbReference type="Pfam" id="PF00063">
    <property type="entry name" value="Myosin_head"/>
    <property type="match status" value="1"/>
</dbReference>
<dbReference type="Pfam" id="PF06017">
    <property type="entry name" value="Myosin_TH1"/>
    <property type="match status" value="1"/>
</dbReference>
<dbReference type="PRINTS" id="PR00193">
    <property type="entry name" value="MYOSINHEAVY"/>
</dbReference>
<dbReference type="SMART" id="SM00242">
    <property type="entry name" value="MYSc"/>
    <property type="match status" value="1"/>
</dbReference>
<dbReference type="SUPFAM" id="SSF52540">
    <property type="entry name" value="P-loop containing nucleoside triphosphate hydrolases"/>
    <property type="match status" value="1"/>
</dbReference>
<dbReference type="PROSITE" id="PS50096">
    <property type="entry name" value="IQ"/>
    <property type="match status" value="1"/>
</dbReference>
<dbReference type="PROSITE" id="PS51456">
    <property type="entry name" value="MYOSIN_MOTOR"/>
    <property type="match status" value="1"/>
</dbReference>
<dbReference type="PROSITE" id="PS51757">
    <property type="entry name" value="TH1"/>
    <property type="match status" value="1"/>
</dbReference>
<name>MYO1H_HUMAN</name>
<protein>
    <recommendedName>
        <fullName>Unconventional myosin-Ih</fullName>
    </recommendedName>
    <alternativeName>
        <fullName>Myosin-1H</fullName>
    </alternativeName>
</protein>
<feature type="chain" id="PRO_0000333237" description="Unconventional myosin-Ih">
    <location>
        <begin position="1"/>
        <end position="1032"/>
    </location>
</feature>
<feature type="domain" description="Myosin motor" evidence="3">
    <location>
        <begin position="12"/>
        <end position="701"/>
    </location>
</feature>
<feature type="domain" description="IQ 1" evidence="2">
    <location>
        <begin position="704"/>
        <end position="726"/>
    </location>
</feature>
<feature type="domain" description="IQ 2" evidence="2">
    <location>
        <begin position="727"/>
        <end position="756"/>
    </location>
</feature>
<feature type="domain" description="TH1" evidence="4">
    <location>
        <begin position="855"/>
        <end position="1029"/>
    </location>
</feature>
<feature type="region of interest" description="Actin-binding" evidence="3">
    <location>
        <begin position="578"/>
        <end position="600"/>
    </location>
</feature>
<feature type="binding site" evidence="1">
    <location>
        <begin position="105"/>
        <end position="112"/>
    </location>
    <ligand>
        <name>ATP</name>
        <dbReference type="ChEBI" id="CHEBI:30616"/>
    </ligand>
</feature>
<feature type="modified residue" description="Phosphoserine" evidence="9">
    <location>
        <position position="365"/>
    </location>
</feature>
<feature type="splice variant" id="VSP_033497" description="In isoform 2." evidence="6">
    <location>
        <begin position="1"/>
        <end position="819"/>
    </location>
</feature>
<feature type="splice variant" id="VSP_053792" description="In isoform 3." evidence="7">
    <original>VGQRILDPLLLLTW</original>
    <variation>DFTR</variation>
    <location>
        <begin position="370"/>
        <end position="383"/>
    </location>
</feature>
<feature type="splice variant" id="VSP_033498" description="In isoform 2." evidence="6">
    <original>VSTSNLSDGI</original>
    <variation>KKWAIFKTMH</variation>
    <location>
        <begin position="937"/>
        <end position="946"/>
    </location>
</feature>
<feature type="splice variant" id="VSP_033499" description="In isoform 2." evidence="6">
    <location>
        <begin position="947"/>
        <end position="1032"/>
    </location>
</feature>
<feature type="sequence variant" id="VAR_043131" description="In dbSNP:rs11611277.">
    <original>S</original>
    <variation>R</variation>
    <location>
        <position position="37"/>
    </location>
</feature>
<feature type="sequence variant" id="VAR_043132" description="In dbSNP:rs34725387.">
    <original>H</original>
    <variation>Y</variation>
    <location>
        <position position="705"/>
    </location>
</feature>
<feature type="sequence variant" id="VAR_050213" description="In dbSNP:rs3825393.">
    <original>L</original>
    <variation>P</variation>
    <location>
        <position position="1011"/>
    </location>
</feature>
<feature type="sequence conflict" description="In Ref. 3; DV080460." evidence="8" ref="3">
    <original>K</original>
    <variation>T</variation>
    <location>
        <position position="348"/>
    </location>
</feature>
<feature type="helix" evidence="10">
    <location>
        <begin position="754"/>
        <end position="764"/>
    </location>
</feature>
<sequence length="1032" mass="119037">MEGALTARDKVGVQDFVLLDAYTSESAFVDNLRKRFSENLIYTYIGTLLVSVNPYQELGIYTVSQMELYQGVNFFELPPHVYAIADNAYRMMCAELNNHFILISGESGAGKTEASKKILEYFAVTCPMTQSLQIARDRLLFSNPVLEAFGNARTLRNDNSSRFGKYMDIQFDFQGIPVGGHIISYLIEKSRVVYQNEGERNFHIFYQLLAGGEEERLSYLGLERDPQLYKYLSQGHCAKESSISDKNDWKTVSNAFSVIDFTEADLENLFGIIASVLHLGNIGFEEDDQGCATIPDTHEIKWIAKLLGVHPSVLLEALTHRKIEAKTEEVICPLTLELSVYARDAMAKAVYGRTFTWLVNKINSSLVNKVGQRILDPLLLLTWKTVIGLLDIYGFEVFDKNGFEQFCINYCNEKLQQLLIERTLKAEQAEYEMEGIEWEPIKYFNNKIICDLVEERHKGIISILDEECIRPGPATDLSFLEKLEEKVGKHAHFETRKLAGPKGRKRIGWMEFRLLHYAGEVTYCTKGFLEKNNDLLYRHLKEVLCKSKNIILRECFLLAELENRRRPPTVGTQFKNSLSSLLETLISKEPSYIRCIKPNDRKEPSKFDDFLIRHQIKYLGLMEHLRVRRAGFAYRRKYEHFLQRYKSLCPDTWPHWHGPPAEGVERLIKYIGYKPEEYKLGKTKIFIRFPRTLFATEDAFEFSKHQLVARIQATYKRCLGRREYVKKRQAAIKLEAHWRGALARKAIQRRKWAVRIIRKFIKGFISRNKPLCPDNEEFIVFVRKNYILNLRYHLPKTVLDKSWLRPPGILENASDLLRKMCVRNLVQKYCRGITAERKAMMQQKVVTSEIFRGRKDGYTESLNQPFVNSRIDEGDINPKVLQLISHEKIQYGVPVIKYDRKGFKARQRQLILTQKAAYVVELAKIKQKIEYSALKGVSTSNLSDGILVIHVSPEDSKQKGDAVLQCGHVFEAVTKLVMLVKKENIVNVVQGSLQFFISPGKEGTIVFDTGLEEQVYKNKNGQLTVVSVRRKS</sequence>
<keyword id="KW-0002">3D-structure</keyword>
<keyword id="KW-0009">Actin-binding</keyword>
<keyword id="KW-0025">Alternative splicing</keyword>
<keyword id="KW-0067">ATP-binding</keyword>
<keyword id="KW-0505">Motor protein</keyword>
<keyword id="KW-0518">Myosin</keyword>
<keyword id="KW-0547">Nucleotide-binding</keyword>
<keyword id="KW-0597">Phosphoprotein</keyword>
<keyword id="KW-1267">Proteomics identification</keyword>
<keyword id="KW-1185">Reference proteome</keyword>
<keyword id="KW-0677">Repeat</keyword>